<feature type="chain" id="PRO_0000455422" description="Inactive adenylate kinase">
    <location>
        <begin position="1"/>
        <end position="263"/>
    </location>
</feature>
<organism evidence="5">
    <name type="scientific">Plasmodium falciparum (isolate 3D7)</name>
    <dbReference type="NCBI Taxonomy" id="36329"/>
    <lineage>
        <taxon>Eukaryota</taxon>
        <taxon>Sar</taxon>
        <taxon>Alveolata</taxon>
        <taxon>Apicomplexa</taxon>
        <taxon>Aconoidasida</taxon>
        <taxon>Haemosporida</taxon>
        <taxon>Plasmodiidae</taxon>
        <taxon>Plasmodium</taxon>
        <taxon>Plasmodium (Laverania)</taxon>
    </lineage>
</organism>
<evidence type="ECO:0000269" key="1">
    <source>
    </source>
</evidence>
<evidence type="ECO:0000303" key="2">
    <source>
    </source>
</evidence>
<evidence type="ECO:0000305" key="3"/>
<evidence type="ECO:0000312" key="4">
    <source>
        <dbReference type="EMBL" id="CAX64260.1"/>
    </source>
</evidence>
<evidence type="ECO:0000312" key="5">
    <source>
        <dbReference type="Proteomes" id="UP000001450"/>
    </source>
</evidence>
<keyword id="KW-0963">Cytoplasm</keyword>
<keyword id="KW-1185">Reference proteome</keyword>
<gene>
    <name evidence="2" type="primary">AKLP2</name>
    <name evidence="4" type="ORF">PF3D7_0931900</name>
</gene>
<name>KADL_PLAF7</name>
<proteinExistence type="evidence at protein level"/>
<protein>
    <recommendedName>
        <fullName evidence="3">Inactive adenylate kinase</fullName>
    </recommendedName>
    <alternativeName>
        <fullName evidence="2">Adenylate kinase-like protein 2</fullName>
    </alternativeName>
</protein>
<accession>C0H582</accession>
<comment type="function">
    <text evidence="1">Lacks adenylate kinase activity.</text>
</comment>
<comment type="subcellular location">
    <subcellularLocation>
        <location evidence="1">Cytoplasm</location>
    </subcellularLocation>
</comment>
<comment type="similarity">
    <text evidence="3">Belongs to the adenylate kinase family.</text>
</comment>
<comment type="caution">
    <text evidence="1">Although it belongs to the adenylate kinase family, lacks several residues involved in ATP and AMP binding and has no adenylate kinase activity.</text>
</comment>
<reference evidence="5" key="1">
    <citation type="journal article" date="2002" name="Nature">
        <title>Genome sequence of the human malaria parasite Plasmodium falciparum.</title>
        <authorList>
            <person name="Gardner M.J."/>
            <person name="Hall N."/>
            <person name="Fung E."/>
            <person name="White O."/>
            <person name="Berriman M."/>
            <person name="Hyman R.W."/>
            <person name="Carlton J.M."/>
            <person name="Pain A."/>
            <person name="Nelson K.E."/>
            <person name="Bowman S."/>
            <person name="Paulsen I.T."/>
            <person name="James K.D."/>
            <person name="Eisen J.A."/>
            <person name="Rutherford K.M."/>
            <person name="Salzberg S.L."/>
            <person name="Craig A."/>
            <person name="Kyes S."/>
            <person name="Chan M.-S."/>
            <person name="Nene V."/>
            <person name="Shallom S.J."/>
            <person name="Suh B."/>
            <person name="Peterson J."/>
            <person name="Angiuoli S."/>
            <person name="Pertea M."/>
            <person name="Allen J."/>
            <person name="Selengut J."/>
            <person name="Haft D."/>
            <person name="Mather M.W."/>
            <person name="Vaidya A.B."/>
            <person name="Martin D.M.A."/>
            <person name="Fairlamb A.H."/>
            <person name="Fraunholz M.J."/>
            <person name="Roos D.S."/>
            <person name="Ralph S.A."/>
            <person name="McFadden G.I."/>
            <person name="Cummings L.M."/>
            <person name="Subramanian G.M."/>
            <person name="Mungall C."/>
            <person name="Venter J.C."/>
            <person name="Carucci D.J."/>
            <person name="Hoffman S.L."/>
            <person name="Newbold C."/>
            <person name="Davis R.W."/>
            <person name="Fraser C.M."/>
            <person name="Barrell B.G."/>
        </authorList>
    </citation>
    <scope>NUCLEOTIDE SEQUENCE [LARGE SCALE GENOMIC DNA]</scope>
    <source>
        <strain evidence="5">3D7</strain>
    </source>
</reference>
<reference evidence="5" key="2">
    <citation type="journal article" date="2002" name="Nature">
        <title>Sequence of Plasmodium falciparum chromosomes 1, 3-9 and 13.</title>
        <authorList>
            <person name="Hall N."/>
            <person name="Pain A."/>
            <person name="Berriman M."/>
            <person name="Churcher C.M."/>
            <person name="Harris B."/>
            <person name="Harris D."/>
            <person name="Mungall K.L."/>
            <person name="Bowman S."/>
            <person name="Atkin R."/>
            <person name="Baker S."/>
            <person name="Barron A."/>
            <person name="Brooks K."/>
            <person name="Buckee C.O."/>
            <person name="Burrows C."/>
            <person name="Cherevach I."/>
            <person name="Chillingworth C."/>
            <person name="Chillingworth T."/>
            <person name="Christodoulou Z."/>
            <person name="Clark L."/>
            <person name="Clark R."/>
            <person name="Corton C."/>
            <person name="Cronin A."/>
            <person name="Davies R.M."/>
            <person name="Davis P."/>
            <person name="Dear P."/>
            <person name="Dearden F."/>
            <person name="Doggett J."/>
            <person name="Feltwell T."/>
            <person name="Goble A."/>
            <person name="Goodhead I."/>
            <person name="Gwilliam R."/>
            <person name="Hamlin N."/>
            <person name="Hance Z."/>
            <person name="Harper D."/>
            <person name="Hauser H."/>
            <person name="Hornsby T."/>
            <person name="Holroyd S."/>
            <person name="Horrocks P."/>
            <person name="Humphray S."/>
            <person name="Jagels K."/>
            <person name="James K.D."/>
            <person name="Johnson D."/>
            <person name="Kerhornou A."/>
            <person name="Knights A."/>
            <person name="Konfortov B."/>
            <person name="Kyes S."/>
            <person name="Larke N."/>
            <person name="Lawson D."/>
            <person name="Lennard N."/>
            <person name="Line A."/>
            <person name="Maddison M."/>
            <person name="Mclean J."/>
            <person name="Mooney P."/>
            <person name="Moule S."/>
            <person name="Murphy L."/>
            <person name="Oliver K."/>
            <person name="Ormond D."/>
            <person name="Price C."/>
            <person name="Quail M.A."/>
            <person name="Rabbinowitsch E."/>
            <person name="Rajandream M.A."/>
            <person name="Rutter S."/>
            <person name="Rutherford K.M."/>
            <person name="Sanders M."/>
            <person name="Simmonds M."/>
            <person name="Seeger K."/>
            <person name="Sharp S."/>
            <person name="Smith R."/>
            <person name="Squares R."/>
            <person name="Squares S."/>
            <person name="Stevens K."/>
            <person name="Taylor K."/>
            <person name="Tivey A."/>
            <person name="Unwin L."/>
            <person name="Whitehead S."/>
            <person name="Woodward J.R."/>
            <person name="Sulston J.E."/>
            <person name="Craig A."/>
            <person name="Newbold C."/>
            <person name="Barrell B.G."/>
        </authorList>
    </citation>
    <scope>NUCLEOTIDE SEQUENCE [LARGE SCALE GENOMIC DNA]</scope>
    <source>
        <strain evidence="5">3D7</strain>
    </source>
</reference>
<reference evidence="3" key="3">
    <citation type="journal article" date="2012" name="FEBS Lett.">
        <title>Subcellular localization of adenylate kinases in Plasmodium falciparum.</title>
        <authorList>
            <person name="Ma J."/>
            <person name="Rahlfs S."/>
            <person name="Jortzik E."/>
            <person name="Schirmer R.H."/>
            <person name="Przyborski J.M."/>
            <person name="Becker K."/>
        </authorList>
    </citation>
    <scope>FUNCTION</scope>
    <scope>LACK OF CATALYTIC ACTIVITY</scope>
    <scope>SUBCELLULAR LOCATION</scope>
</reference>
<sequence length="263" mass="31095">METLLHSEILKKYKEETNEYIKKKNVEKLFDIILKNVLINKPDNIYLYIYNNIYSFLLNKIFIMGPPVLKITSMLSSHISEFFNYYHISLPILIQQYKLNKGESSNNKIIVNDEIISFILKENIHNLDSKKKKGYIVEGYPNNNLQAYSCLKYLPSHVFVLYADEEYIYKKYEEENDIAIFSYTQKKDYDINEPHEINNIDVKPLKDQVLSYIRNISDMLTILGTNKKVLNLHDFNDQMLIDHVKNEVSKNKDEWDSTLNGDI</sequence>
<dbReference type="EMBL" id="AL844508">
    <property type="protein sequence ID" value="CAX64260.1"/>
    <property type="molecule type" value="Genomic_DNA"/>
</dbReference>
<dbReference type="RefSeq" id="XP_002808979.1">
    <property type="nucleotide sequence ID" value="XM_002808933.1"/>
</dbReference>
<dbReference type="SMR" id="C0H582"/>
<dbReference type="STRING" id="36329.C0H582"/>
<dbReference type="PaxDb" id="5833-PFI1550c"/>
<dbReference type="EnsemblProtists" id="CAX64260">
    <property type="protein sequence ID" value="CAX64260"/>
    <property type="gene ID" value="PF3D7_0931900"/>
</dbReference>
<dbReference type="GeneID" id="813590"/>
<dbReference type="KEGG" id="pfa:PF3D7_0931900"/>
<dbReference type="VEuPathDB" id="PlasmoDB:PF3D7_0931900"/>
<dbReference type="HOGENOM" id="CLU_1067407_0_0_1"/>
<dbReference type="InParanoid" id="C0H582"/>
<dbReference type="OMA" id="VYLYIYK"/>
<dbReference type="OrthoDB" id="522106at2759"/>
<dbReference type="PhylomeDB" id="C0H582"/>
<dbReference type="Reactome" id="R-PFA-499943">
    <property type="pathway name" value="Interconversion of nucleotide di- and triphosphates"/>
</dbReference>
<dbReference type="Proteomes" id="UP000001450">
    <property type="component" value="Chromosome 9"/>
</dbReference>
<dbReference type="GO" id="GO:0005737">
    <property type="term" value="C:cytoplasm"/>
    <property type="evidence" value="ECO:0000318"/>
    <property type="project" value="GO_Central"/>
</dbReference>
<dbReference type="GO" id="GO:0005829">
    <property type="term" value="C:cytosol"/>
    <property type="evidence" value="ECO:0000314"/>
    <property type="project" value="CACAO"/>
</dbReference>
<dbReference type="GO" id="GO:0005759">
    <property type="term" value="C:mitochondrial matrix"/>
    <property type="evidence" value="ECO:0000318"/>
    <property type="project" value="GO_Central"/>
</dbReference>
<dbReference type="GO" id="GO:0004017">
    <property type="term" value="F:adenylate kinase activity"/>
    <property type="evidence" value="ECO:0000318"/>
    <property type="project" value="GO_Central"/>
</dbReference>
<dbReference type="GO" id="GO:0046899">
    <property type="term" value="F:nucleoside triphosphate adenylate kinase activity"/>
    <property type="evidence" value="ECO:0000318"/>
    <property type="project" value="GO_Central"/>
</dbReference>
<dbReference type="GO" id="GO:0046033">
    <property type="term" value="P:AMP metabolic process"/>
    <property type="evidence" value="ECO:0000318"/>
    <property type="project" value="GO_Central"/>
</dbReference>
<dbReference type="GO" id="GO:0009142">
    <property type="term" value="P:nucleoside triphosphate biosynthetic process"/>
    <property type="evidence" value="ECO:0000318"/>
    <property type="project" value="GO_Central"/>
</dbReference>
<dbReference type="FunFam" id="3.40.50.300:FF:002626">
    <property type="entry name" value="Adenylate kinase-like protein 2"/>
    <property type="match status" value="1"/>
</dbReference>
<dbReference type="Gene3D" id="3.40.50.300">
    <property type="entry name" value="P-loop containing nucleotide triphosphate hydrolases"/>
    <property type="match status" value="1"/>
</dbReference>
<dbReference type="InterPro" id="IPR027417">
    <property type="entry name" value="P-loop_NTPase"/>
</dbReference>
<dbReference type="SUPFAM" id="SSF52540">
    <property type="entry name" value="P-loop containing nucleoside triphosphate hydrolases"/>
    <property type="match status" value="1"/>
</dbReference>